<name>RRF_COXB2</name>
<keyword id="KW-0963">Cytoplasm</keyword>
<keyword id="KW-0648">Protein biosynthesis</keyword>
<protein>
    <recommendedName>
        <fullName evidence="1">Ribosome-recycling factor</fullName>
        <shortName evidence="1">RRF</shortName>
    </recommendedName>
    <alternativeName>
        <fullName evidence="1">Ribosome-releasing factor</fullName>
    </alternativeName>
</protein>
<reference key="1">
    <citation type="journal article" date="2009" name="Infect. Immun.">
        <title>Comparative genomics reveal extensive transposon-mediated genomic plasticity and diversity among potential effector proteins within the genus Coxiella.</title>
        <authorList>
            <person name="Beare P.A."/>
            <person name="Unsworth N."/>
            <person name="Andoh M."/>
            <person name="Voth D.E."/>
            <person name="Omsland A."/>
            <person name="Gilk S.D."/>
            <person name="Williams K.P."/>
            <person name="Sobral B.W."/>
            <person name="Kupko J.J. III"/>
            <person name="Porcella S.F."/>
            <person name="Samuel J.E."/>
            <person name="Heinzen R.A."/>
        </authorList>
    </citation>
    <scope>NUCLEOTIDE SEQUENCE [LARGE SCALE GENOMIC DNA]</scope>
    <source>
        <strain>CbuG_Q212</strain>
    </source>
</reference>
<comment type="function">
    <text evidence="1">Responsible for the release of ribosomes from messenger RNA at the termination of protein biosynthesis. May increase the efficiency of translation by recycling ribosomes from one round of translation to another.</text>
</comment>
<comment type="subcellular location">
    <subcellularLocation>
        <location evidence="1">Cytoplasm</location>
    </subcellularLocation>
</comment>
<comment type="similarity">
    <text evidence="1">Belongs to the RRF family.</text>
</comment>
<accession>B6IZA9</accession>
<feature type="chain" id="PRO_1000090732" description="Ribosome-recycling factor">
    <location>
        <begin position="1"/>
        <end position="185"/>
    </location>
</feature>
<dbReference type="EMBL" id="CP001019">
    <property type="protein sequence ID" value="ACJ18037.1"/>
    <property type="molecule type" value="Genomic_DNA"/>
</dbReference>
<dbReference type="RefSeq" id="WP_005771681.1">
    <property type="nucleotide sequence ID" value="NC_011527.1"/>
</dbReference>
<dbReference type="SMR" id="B6IZA9"/>
<dbReference type="KEGG" id="cbg:CbuG_0628"/>
<dbReference type="HOGENOM" id="CLU_073981_2_0_6"/>
<dbReference type="GO" id="GO:0005829">
    <property type="term" value="C:cytosol"/>
    <property type="evidence" value="ECO:0007669"/>
    <property type="project" value="GOC"/>
</dbReference>
<dbReference type="GO" id="GO:0043023">
    <property type="term" value="F:ribosomal large subunit binding"/>
    <property type="evidence" value="ECO:0007669"/>
    <property type="project" value="TreeGrafter"/>
</dbReference>
<dbReference type="GO" id="GO:0002184">
    <property type="term" value="P:cytoplasmic translational termination"/>
    <property type="evidence" value="ECO:0007669"/>
    <property type="project" value="TreeGrafter"/>
</dbReference>
<dbReference type="CDD" id="cd00520">
    <property type="entry name" value="RRF"/>
    <property type="match status" value="1"/>
</dbReference>
<dbReference type="FunFam" id="1.10.132.20:FF:000001">
    <property type="entry name" value="Ribosome-recycling factor"/>
    <property type="match status" value="1"/>
</dbReference>
<dbReference type="FunFam" id="3.30.1360.40:FF:000001">
    <property type="entry name" value="Ribosome-recycling factor"/>
    <property type="match status" value="1"/>
</dbReference>
<dbReference type="Gene3D" id="3.30.1360.40">
    <property type="match status" value="1"/>
</dbReference>
<dbReference type="Gene3D" id="1.10.132.20">
    <property type="entry name" value="Ribosome-recycling factor"/>
    <property type="match status" value="1"/>
</dbReference>
<dbReference type="HAMAP" id="MF_00040">
    <property type="entry name" value="RRF"/>
    <property type="match status" value="1"/>
</dbReference>
<dbReference type="InterPro" id="IPR002661">
    <property type="entry name" value="Ribosome_recyc_fac"/>
</dbReference>
<dbReference type="InterPro" id="IPR023584">
    <property type="entry name" value="Ribosome_recyc_fac_dom"/>
</dbReference>
<dbReference type="InterPro" id="IPR036191">
    <property type="entry name" value="RRF_sf"/>
</dbReference>
<dbReference type="NCBIfam" id="TIGR00496">
    <property type="entry name" value="frr"/>
    <property type="match status" value="1"/>
</dbReference>
<dbReference type="PANTHER" id="PTHR20982:SF3">
    <property type="entry name" value="MITOCHONDRIAL RIBOSOME RECYCLING FACTOR PSEUDO 1"/>
    <property type="match status" value="1"/>
</dbReference>
<dbReference type="PANTHER" id="PTHR20982">
    <property type="entry name" value="RIBOSOME RECYCLING FACTOR"/>
    <property type="match status" value="1"/>
</dbReference>
<dbReference type="Pfam" id="PF01765">
    <property type="entry name" value="RRF"/>
    <property type="match status" value="1"/>
</dbReference>
<dbReference type="SUPFAM" id="SSF55194">
    <property type="entry name" value="Ribosome recycling factor, RRF"/>
    <property type="match status" value="1"/>
</dbReference>
<gene>
    <name evidence="1" type="primary">frr</name>
    <name type="ordered locus">CbuG_0628</name>
</gene>
<organism>
    <name type="scientific">Coxiella burnetii (strain CbuG_Q212)</name>
    <name type="common">Coxiella burnetii (strain Q212)</name>
    <dbReference type="NCBI Taxonomy" id="434923"/>
    <lineage>
        <taxon>Bacteria</taxon>
        <taxon>Pseudomonadati</taxon>
        <taxon>Pseudomonadota</taxon>
        <taxon>Gammaproteobacteria</taxon>
        <taxon>Legionellales</taxon>
        <taxon>Coxiellaceae</taxon>
        <taxon>Coxiella</taxon>
    </lineage>
</organism>
<sequence>MINDIINDSKSRMEKSLGSLKTELAKLRTGRAHPSLLEHIKVDYYNVETPLSQVASIAIENPRTLSITPWEKNMVGPIEKAIQKADLGLNPATVGMVIRVPLPPLTEERRKELARVVREEAEHARVAIRNIRREANNDLKELMKEKEISEDEERRAQTAIQKLTDAQIAEVDKMASQKEADLMAV</sequence>
<evidence type="ECO:0000255" key="1">
    <source>
        <dbReference type="HAMAP-Rule" id="MF_00040"/>
    </source>
</evidence>
<proteinExistence type="inferred from homology"/>